<keyword id="KW-0997">Cell inner membrane</keyword>
<keyword id="KW-1003">Cell membrane</keyword>
<keyword id="KW-0350">Heme biosynthesis</keyword>
<keyword id="KW-0472">Membrane</keyword>
<keyword id="KW-1185">Reference proteome</keyword>
<keyword id="KW-0808">Transferase</keyword>
<keyword id="KW-0812">Transmembrane</keyword>
<keyword id="KW-1133">Transmembrane helix</keyword>
<organism>
    <name type="scientific">Shewanella denitrificans (strain OS217 / ATCC BAA-1090 / DSM 15013)</name>
    <dbReference type="NCBI Taxonomy" id="318161"/>
    <lineage>
        <taxon>Bacteria</taxon>
        <taxon>Pseudomonadati</taxon>
        <taxon>Pseudomonadota</taxon>
        <taxon>Gammaproteobacteria</taxon>
        <taxon>Alteromonadales</taxon>
        <taxon>Shewanellaceae</taxon>
        <taxon>Shewanella</taxon>
    </lineage>
</organism>
<gene>
    <name evidence="1" type="primary">cyoE</name>
    <name type="ordered locus">Sden_3524</name>
</gene>
<protein>
    <recommendedName>
        <fullName evidence="1">Protoheme IX farnesyltransferase</fullName>
        <ecNumber evidence="1">2.5.1.141</ecNumber>
    </recommendedName>
    <alternativeName>
        <fullName evidence="1">Heme B farnesyltransferase</fullName>
    </alternativeName>
    <alternativeName>
        <fullName evidence="1">Heme O synthase</fullName>
    </alternativeName>
</protein>
<feature type="chain" id="PRO_0000326944" description="Protoheme IX farnesyltransferase">
    <location>
        <begin position="1"/>
        <end position="301"/>
    </location>
</feature>
<feature type="transmembrane region" description="Helical" evidence="1">
    <location>
        <begin position="29"/>
        <end position="49"/>
    </location>
</feature>
<feature type="transmembrane region" description="Helical" evidence="1">
    <location>
        <begin position="51"/>
        <end position="71"/>
    </location>
</feature>
<feature type="transmembrane region" description="Helical" evidence="1">
    <location>
        <begin position="101"/>
        <end position="121"/>
    </location>
</feature>
<feature type="transmembrane region" description="Helical" evidence="1">
    <location>
        <begin position="123"/>
        <end position="143"/>
    </location>
</feature>
<feature type="transmembrane region" description="Helical" evidence="1">
    <location>
        <begin position="150"/>
        <end position="170"/>
    </location>
</feature>
<feature type="transmembrane region" description="Helical" evidence="1">
    <location>
        <begin position="177"/>
        <end position="197"/>
    </location>
</feature>
<feature type="transmembrane region" description="Helical" evidence="1">
    <location>
        <begin position="223"/>
        <end position="243"/>
    </location>
</feature>
<feature type="transmembrane region" description="Helical" evidence="1">
    <location>
        <begin position="244"/>
        <end position="264"/>
    </location>
</feature>
<feature type="transmembrane region" description="Helical" evidence="1">
    <location>
        <begin position="281"/>
        <end position="301"/>
    </location>
</feature>
<proteinExistence type="inferred from homology"/>
<sequence>MAKPLIIPAQSMSFSLSWRDYFEMTKPKVVALMLLTVLVGMCLALPGAVPLQPLVFGMLGIAMMAGSAAAFNHLIDRRIDGLMARTYNRPLPKGKLSVNKAFSFAFSLGVLGFVLLYWWVNPLTAWLTFASLIGYAVVYTAYLKRATPQNIVIGGLAGAMPPLLGWTAVTNELHGNALLLVIIIFTWTPPHFWALAIHRKAEYAKVDIPMLPVTHGVEFTKTCILLYTFLLALACLLPVLVGMSGPVYLVGSSILSCGFIYKAWQLKYQDEPGLAMKVFKFSIYHLMLLFVVLLVDHYLWG</sequence>
<dbReference type="EC" id="2.5.1.141" evidence="1"/>
<dbReference type="EMBL" id="CP000302">
    <property type="protein sequence ID" value="ABE56799.1"/>
    <property type="molecule type" value="Genomic_DNA"/>
</dbReference>
<dbReference type="RefSeq" id="WP_011497939.1">
    <property type="nucleotide sequence ID" value="NC_007954.1"/>
</dbReference>
<dbReference type="SMR" id="Q12IC7"/>
<dbReference type="STRING" id="318161.Sden_3524"/>
<dbReference type="KEGG" id="sdn:Sden_3524"/>
<dbReference type="eggNOG" id="COG0109">
    <property type="taxonomic scope" value="Bacteria"/>
</dbReference>
<dbReference type="HOGENOM" id="CLU_029631_0_2_6"/>
<dbReference type="OrthoDB" id="9814417at2"/>
<dbReference type="UniPathway" id="UPA00834">
    <property type="reaction ID" value="UER00712"/>
</dbReference>
<dbReference type="Proteomes" id="UP000001982">
    <property type="component" value="Chromosome"/>
</dbReference>
<dbReference type="GO" id="GO:0005886">
    <property type="term" value="C:plasma membrane"/>
    <property type="evidence" value="ECO:0007669"/>
    <property type="project" value="UniProtKB-SubCell"/>
</dbReference>
<dbReference type="GO" id="GO:0008495">
    <property type="term" value="F:protoheme IX farnesyltransferase activity"/>
    <property type="evidence" value="ECO:0007669"/>
    <property type="project" value="UniProtKB-UniRule"/>
</dbReference>
<dbReference type="GO" id="GO:0048034">
    <property type="term" value="P:heme O biosynthetic process"/>
    <property type="evidence" value="ECO:0007669"/>
    <property type="project" value="UniProtKB-UniRule"/>
</dbReference>
<dbReference type="CDD" id="cd13957">
    <property type="entry name" value="PT_UbiA_Cox10"/>
    <property type="match status" value="1"/>
</dbReference>
<dbReference type="FunFam" id="1.10.357.140:FF:000001">
    <property type="entry name" value="Protoheme IX farnesyltransferase"/>
    <property type="match status" value="1"/>
</dbReference>
<dbReference type="Gene3D" id="1.10.357.140">
    <property type="entry name" value="UbiA prenyltransferase"/>
    <property type="match status" value="1"/>
</dbReference>
<dbReference type="HAMAP" id="MF_00154">
    <property type="entry name" value="CyoE_CtaB"/>
    <property type="match status" value="1"/>
</dbReference>
<dbReference type="InterPro" id="IPR006369">
    <property type="entry name" value="Protohaem_IX_farnesylTrfase"/>
</dbReference>
<dbReference type="InterPro" id="IPR000537">
    <property type="entry name" value="UbiA_prenyltransferase"/>
</dbReference>
<dbReference type="InterPro" id="IPR030470">
    <property type="entry name" value="UbiA_prenylTrfase_CS"/>
</dbReference>
<dbReference type="InterPro" id="IPR044878">
    <property type="entry name" value="UbiA_sf"/>
</dbReference>
<dbReference type="NCBIfam" id="TIGR01473">
    <property type="entry name" value="cyoE_ctaB"/>
    <property type="match status" value="1"/>
</dbReference>
<dbReference type="NCBIfam" id="NF003349">
    <property type="entry name" value="PRK04375.1-2"/>
    <property type="match status" value="1"/>
</dbReference>
<dbReference type="PANTHER" id="PTHR43448:SF7">
    <property type="entry name" value="4-HYDROXYBENZOATE SOLANESYLTRANSFERASE"/>
    <property type="match status" value="1"/>
</dbReference>
<dbReference type="PANTHER" id="PTHR43448">
    <property type="entry name" value="PROTOHEME IX FARNESYLTRANSFERASE, MITOCHONDRIAL"/>
    <property type="match status" value="1"/>
</dbReference>
<dbReference type="Pfam" id="PF01040">
    <property type="entry name" value="UbiA"/>
    <property type="match status" value="1"/>
</dbReference>
<dbReference type="PROSITE" id="PS00943">
    <property type="entry name" value="UBIA"/>
    <property type="match status" value="1"/>
</dbReference>
<name>CYOE_SHEDO</name>
<evidence type="ECO:0000255" key="1">
    <source>
        <dbReference type="HAMAP-Rule" id="MF_00154"/>
    </source>
</evidence>
<reference key="1">
    <citation type="submission" date="2006-03" db="EMBL/GenBank/DDBJ databases">
        <title>Complete sequence of Shewanella denitrificans OS217.</title>
        <authorList>
            <consortium name="US DOE Joint Genome Institute"/>
            <person name="Copeland A."/>
            <person name="Lucas S."/>
            <person name="Lapidus A."/>
            <person name="Barry K."/>
            <person name="Detter J.C."/>
            <person name="Glavina del Rio T."/>
            <person name="Hammon N."/>
            <person name="Israni S."/>
            <person name="Dalin E."/>
            <person name="Tice H."/>
            <person name="Pitluck S."/>
            <person name="Brettin T."/>
            <person name="Bruce D."/>
            <person name="Han C."/>
            <person name="Tapia R."/>
            <person name="Gilna P."/>
            <person name="Kiss H."/>
            <person name="Schmutz J."/>
            <person name="Larimer F."/>
            <person name="Land M."/>
            <person name="Hauser L."/>
            <person name="Kyrpides N."/>
            <person name="Lykidis A."/>
            <person name="Richardson P."/>
        </authorList>
    </citation>
    <scope>NUCLEOTIDE SEQUENCE [LARGE SCALE GENOMIC DNA]</scope>
    <source>
        <strain>OS217 / ATCC BAA-1090 / DSM 15013</strain>
    </source>
</reference>
<comment type="function">
    <text evidence="1">Converts heme B (protoheme IX) to heme O by substitution of the vinyl group on carbon 2 of heme B porphyrin ring with a hydroxyethyl farnesyl side group.</text>
</comment>
<comment type="catalytic activity">
    <reaction evidence="1">
        <text>heme b + (2E,6E)-farnesyl diphosphate + H2O = Fe(II)-heme o + diphosphate</text>
        <dbReference type="Rhea" id="RHEA:28070"/>
        <dbReference type="ChEBI" id="CHEBI:15377"/>
        <dbReference type="ChEBI" id="CHEBI:33019"/>
        <dbReference type="ChEBI" id="CHEBI:60344"/>
        <dbReference type="ChEBI" id="CHEBI:60530"/>
        <dbReference type="ChEBI" id="CHEBI:175763"/>
        <dbReference type="EC" id="2.5.1.141"/>
    </reaction>
</comment>
<comment type="pathway">
    <text evidence="1">Porphyrin-containing compound metabolism; heme O biosynthesis; heme O from protoheme: step 1/1.</text>
</comment>
<comment type="subcellular location">
    <subcellularLocation>
        <location evidence="1">Cell inner membrane</location>
        <topology evidence="1">Multi-pass membrane protein</topology>
    </subcellularLocation>
</comment>
<comment type="miscellaneous">
    <text evidence="1">Carbon 2 of the heme B porphyrin ring is defined according to the Fischer nomenclature.</text>
</comment>
<comment type="similarity">
    <text evidence="1">Belongs to the UbiA prenyltransferase family. Protoheme IX farnesyltransferase subfamily.</text>
</comment>
<accession>Q12IC7</accession>